<dbReference type="EC" id="3.2.1.4"/>
<dbReference type="EMBL" id="M58520">
    <property type="protein sequence ID" value="AAA24894.1"/>
    <property type="molecule type" value="Genomic_DNA"/>
</dbReference>
<dbReference type="EMBL" id="M58520">
    <property type="protein sequence ID" value="AAA24895.1"/>
    <property type="status" value="ALT_FRAME"/>
    <property type="molecule type" value="Genomic_DNA"/>
</dbReference>
<dbReference type="PIR" id="A39416">
    <property type="entry name" value="A39416"/>
</dbReference>
<dbReference type="SMR" id="P23665"/>
<dbReference type="CAZy" id="GH9">
    <property type="family name" value="Glycoside Hydrolase Family 9"/>
</dbReference>
<dbReference type="GO" id="GO:0042597">
    <property type="term" value="C:periplasmic space"/>
    <property type="evidence" value="ECO:0007669"/>
    <property type="project" value="UniProtKB-SubCell"/>
</dbReference>
<dbReference type="GO" id="GO:0008810">
    <property type="term" value="F:cellulase activity"/>
    <property type="evidence" value="ECO:0007669"/>
    <property type="project" value="UniProtKB-EC"/>
</dbReference>
<dbReference type="GO" id="GO:0030245">
    <property type="term" value="P:cellulose catabolic process"/>
    <property type="evidence" value="ECO:0007669"/>
    <property type="project" value="UniProtKB-KW"/>
</dbReference>
<dbReference type="Gene3D" id="1.50.10.10">
    <property type="match status" value="1"/>
</dbReference>
<dbReference type="InterPro" id="IPR008928">
    <property type="entry name" value="6-hairpin_glycosidase_sf"/>
</dbReference>
<dbReference type="InterPro" id="IPR012341">
    <property type="entry name" value="6hp_glycosidase-like_sf"/>
</dbReference>
<dbReference type="InterPro" id="IPR001701">
    <property type="entry name" value="Glyco_hydro_9"/>
</dbReference>
<dbReference type="InterPro" id="IPR018221">
    <property type="entry name" value="Glyco_hydro_9_His_AS"/>
</dbReference>
<dbReference type="PANTHER" id="PTHR22298">
    <property type="entry name" value="ENDO-1,4-BETA-GLUCANASE"/>
    <property type="match status" value="1"/>
</dbReference>
<dbReference type="Pfam" id="PF00759">
    <property type="entry name" value="Glyco_hydro_9"/>
    <property type="match status" value="1"/>
</dbReference>
<dbReference type="SUPFAM" id="SSF48208">
    <property type="entry name" value="Six-hairpin glycosidases"/>
    <property type="match status" value="1"/>
</dbReference>
<dbReference type="PROSITE" id="PS60032">
    <property type="entry name" value="GH9_1"/>
    <property type="match status" value="1"/>
</dbReference>
<dbReference type="PROSITE" id="PS00592">
    <property type="entry name" value="GH9_2"/>
    <property type="match status" value="1"/>
</dbReference>
<sequence>MNCRKYLLSGLAVFGLAATSAVAALSTDDYVEAAWMTTRFFGAQRSGQGPNWILDGTSNPTSFTKDSYNGKDVSGGWFDCGDHVMYGQSQGYASYVLALAYAEFTEVSTTFILVTTPTTRKPTTTPMKSGKPNKVRDLLEELRYEADFWVKAAIDGNNFVTVKGDGNADHQKWVTAGAMSKLGSGEGGEPRCITGNANDGFTSGLAAAMLAVMARVDPDTANQAKYLKAAKTAYSYAKSHKGVTNSQGFYESSWWDGRWEDGPFLAELELYRTTGENSYKTAAIDRYDNLKFSLGEGTHFMYSNVVPLSAVMAEAVFEETPHGMRKEAIGVLDLIYEEKAKDKIFQNPNGMGSGKFPVRVPSGGAFLYALSDKFNNTNEHMEMIEKNVSYLLGDNGSKKSYVVGFSKNGANAPSRPHHRGYYANEKRWRRSRRCSESSRKEQALGRYDCWRLY</sequence>
<protein>
    <recommendedName>
        <fullName>Endoglucanase A</fullName>
        <ecNumber>3.2.1.4</ecNumber>
    </recommendedName>
    <alternativeName>
        <fullName>Cellulase</fullName>
    </alternativeName>
    <alternativeName>
        <fullName>Endo-1,4-beta-glucanase</fullName>
    </alternativeName>
</protein>
<keyword id="KW-0119">Carbohydrate metabolism</keyword>
<keyword id="KW-0136">Cellulose degradation</keyword>
<keyword id="KW-0326">Glycosidase</keyword>
<keyword id="KW-0378">Hydrolase</keyword>
<keyword id="KW-0574">Periplasm</keyword>
<keyword id="KW-0624">Polysaccharide degradation</keyword>
<keyword id="KW-0732">Signal</keyword>
<evidence type="ECO:0000255" key="1"/>
<evidence type="ECO:0000255" key="2">
    <source>
        <dbReference type="PROSITE-ProRule" id="PRU10059"/>
    </source>
</evidence>
<evidence type="ECO:0000255" key="3">
    <source>
        <dbReference type="PROSITE-ProRule" id="PRU10140"/>
    </source>
</evidence>
<evidence type="ECO:0000269" key="4">
    <source>
    </source>
</evidence>
<evidence type="ECO:0000305" key="5"/>
<evidence type="ECO:0000305" key="6">
    <source>
    </source>
</evidence>
<accession>P23665</accession>
<accession>P23664</accession>
<reference key="1">
    <citation type="journal article" date="1991" name="J. Bacteriol.">
        <title>endAFS, a novel family E endoglucanase gene from Fibrobacter succinogenes AR1.</title>
        <authorList>
            <person name="Cavicchioli R."/>
            <person name="East P.D."/>
            <person name="Watson K."/>
        </authorList>
    </citation>
    <scope>NUCLEOTIDE SEQUENCE [GENOMIC DNA]</scope>
    <source>
        <strain>AR1</strain>
    </source>
</reference>
<reference key="2">
    <citation type="journal article" date="1991" name="Nucleic Acids Res.">
        <title>The involvement of transcriptional read-through from internal promoters in the expression of a novel endoglucanase gene FSendA, from Fibrobacter succinogenes AR1.</title>
        <authorList>
            <person name="Cavicchioli R."/>
            <person name="Watson K."/>
        </authorList>
    </citation>
    <scope>RIBOSOMAL FRAMESHIFT</scope>
    <source>
        <strain>AR1</strain>
    </source>
</reference>
<reference key="3">
    <citation type="journal article" date="1991" name="Appl. Environ. Microbiol.">
        <title>Molecular cloning, expression, and characterization of endoglucanase genes from Fibrobacter succinogenes AR1.</title>
        <authorList>
            <person name="Cavicchioli R."/>
            <person name="Watson K."/>
        </authorList>
    </citation>
    <scope>SUBSTRATES</scope>
    <scope>SUBUNIT</scope>
    <scope>SUBCELLULAR LOCATION</scope>
    <scope>CHARACTERIZATION</scope>
    <source>
        <strain>AR1</strain>
    </source>
</reference>
<feature type="signal peptide" evidence="1">
    <location>
        <begin position="1"/>
        <end position="26"/>
    </location>
</feature>
<feature type="chain" id="PRO_0000007954" description="Endoglucanase A">
    <location>
        <begin position="27"/>
        <end position="453"/>
    </location>
</feature>
<feature type="region of interest" description="Linker ('hinge') (Pro-Thr box)">
    <location>
        <begin position="115"/>
        <end position="126"/>
    </location>
</feature>
<feature type="active site" description="Nucleophile" evidence="3">
    <location>
        <position position="82"/>
    </location>
</feature>
<feature type="active site" evidence="2">
    <location>
        <position position="417"/>
    </location>
</feature>
<gene>
    <name type="primary">endA</name>
</gene>
<proteinExistence type="evidence at protein level"/>
<name>GUNA_FIBSU</name>
<organism>
    <name type="scientific">Fibrobacter succinogenes</name>
    <name type="common">Bacteroides succinogenes</name>
    <dbReference type="NCBI Taxonomy" id="833"/>
    <lineage>
        <taxon>Bacteria</taxon>
        <taxon>Pseudomonadati</taxon>
        <taxon>Fibrobacterota</taxon>
        <taxon>Fibrobacteria</taxon>
        <taxon>Fibrobacterales</taxon>
        <taxon>Fibrobacteraceae</taxon>
        <taxon>Fibrobacter</taxon>
    </lineage>
</organism>
<comment type="function">
    <text>High levels of endoglucanase activity detected on acid-swollen cellulose, ball-milled cellulose, and carboxymethyl cellulose; moderate levels detected on filter paper, phosphoric acid-swollen cellulose, lichenan, and xylan.</text>
</comment>
<comment type="catalytic activity">
    <reaction>
        <text>Endohydrolysis of (1-&gt;4)-beta-D-glucosidic linkages in cellulose, lichenin and cereal beta-D-glucans.</text>
        <dbReference type="EC" id="3.2.1.4"/>
    </reaction>
</comment>
<comment type="biophysicochemical properties">
    <phDependence>
        <text>Optimum pH is 5.0.</text>
    </phDependence>
    <temperatureDependence>
        <text>Optimum temperature is 37-39 degrees Celsius.</text>
    </temperatureDependence>
</comment>
<comment type="subunit">
    <text evidence="6">Monomer.</text>
</comment>
<comment type="subcellular location">
    <subcellularLocation>
        <location evidence="4">Periplasm</location>
    </subcellularLocation>
    <text>80% periplasmic, 16% extracellular upon overexpression in E.coli.</text>
</comment>
<comment type="similarity">
    <text evidence="3 5">Belongs to the glycosyl hydrolase 9 (cellulase E) family.</text>
</comment>
<comment type="caution">
    <text evidence="5">Expression of endA requires a ribosomal frameshift to allow contiguous translation of a 453 amino acid protein; this is suggested to take place at position 127 but could in fact occur anywhere between positions 82 and 127.</text>
</comment>
<comment type="caution">
    <text evidence="5">On the basis of sequence similarities the C-terminal part of this sequence seems to be incorrect.</text>
</comment>
<comment type="sequence caution" evidence="5">
    <conflict type="frameshift">
        <sequence resource="EMBL-CDS" id="AAA24895"/>
    </conflict>
</comment>